<evidence type="ECO:0000255" key="1"/>
<evidence type="ECO:0000269" key="2">
    <source>
    </source>
</evidence>
<evidence type="ECO:0000269" key="3">
    <source>
    </source>
</evidence>
<evidence type="ECO:0000269" key="4">
    <source>
    </source>
</evidence>
<evidence type="ECO:0000269" key="5">
    <source>
    </source>
</evidence>
<evidence type="ECO:0000269" key="6">
    <source>
    </source>
</evidence>
<evidence type="ECO:0000269" key="7">
    <source>
    </source>
</evidence>
<evidence type="ECO:0000269" key="8">
    <source>
    </source>
</evidence>
<evidence type="ECO:0000303" key="9">
    <source>
    </source>
</evidence>
<evidence type="ECO:0000305" key="10"/>
<evidence type="ECO:0000305" key="11">
    <source>
    </source>
</evidence>
<evidence type="ECO:0000305" key="12">
    <source>
    </source>
</evidence>
<evidence type="ECO:0000305" key="13">
    <source>
    </source>
</evidence>
<evidence type="ECO:0000312" key="14">
    <source>
        <dbReference type="HGNC" id="HGNC:4016"/>
    </source>
</evidence>
<reference key="1">
    <citation type="journal article" date="1992" name="J. Biol. Chem.">
        <title>Isolation of a novel human alpha (1,3)fucosyltransferase gene and molecular comparison to the human Lewis blood group alpha (1,3/1,4)fucosyltransferase gene. Syntenic, homologous, nonallelic genes encoding enzymes with distinct acceptor substrate specificities.</title>
        <authorList>
            <person name="Weston B.W."/>
            <person name="Nair R.P."/>
            <person name="Larsen R.D."/>
            <person name="Lowe J.B."/>
        </authorList>
    </citation>
    <scope>NUCLEOTIDE SEQUENCE [GENOMIC DNA]</scope>
    <scope>CATALYTIC ACTIVITY</scope>
    <scope>FUNCTION</scope>
    <source>
        <tissue>Peripheral blood leukocyte</tissue>
    </source>
</reference>
<reference key="2">
    <citation type="journal article" date="1995" name="J. Biol. Chem.">
        <title>Expression of human chromosome 19p alpha(1,3)-fucosyltransferase genes in normal tissues. Alternative splicing, polyadenylation, and isoforms.</title>
        <authorList>
            <person name="Cameron H.S."/>
            <person name="Szczepaniak D."/>
            <person name="Weston B.W."/>
        </authorList>
    </citation>
    <scope>NUCLEOTIDE SEQUENCE [MRNA]</scope>
    <source>
        <tissue>Colon</tissue>
        <tissue>Kidney</tissue>
        <tissue>Liver</tissue>
    </source>
</reference>
<reference key="3">
    <citation type="journal article" date="2004" name="Nat. Genet.">
        <title>Complete sequencing and characterization of 21,243 full-length human cDNAs.</title>
        <authorList>
            <person name="Ota T."/>
            <person name="Suzuki Y."/>
            <person name="Nishikawa T."/>
            <person name="Otsuki T."/>
            <person name="Sugiyama T."/>
            <person name="Irie R."/>
            <person name="Wakamatsu A."/>
            <person name="Hayashi K."/>
            <person name="Sato H."/>
            <person name="Nagai K."/>
            <person name="Kimura K."/>
            <person name="Makita H."/>
            <person name="Sekine M."/>
            <person name="Obayashi M."/>
            <person name="Nishi T."/>
            <person name="Shibahara T."/>
            <person name="Tanaka T."/>
            <person name="Ishii S."/>
            <person name="Yamamoto J."/>
            <person name="Saito K."/>
            <person name="Kawai Y."/>
            <person name="Isono Y."/>
            <person name="Nakamura Y."/>
            <person name="Nagahari K."/>
            <person name="Murakami K."/>
            <person name="Yasuda T."/>
            <person name="Iwayanagi T."/>
            <person name="Wagatsuma M."/>
            <person name="Shiratori A."/>
            <person name="Sudo H."/>
            <person name="Hosoiri T."/>
            <person name="Kaku Y."/>
            <person name="Kodaira H."/>
            <person name="Kondo H."/>
            <person name="Sugawara M."/>
            <person name="Takahashi M."/>
            <person name="Kanda K."/>
            <person name="Yokoi T."/>
            <person name="Furuya T."/>
            <person name="Kikkawa E."/>
            <person name="Omura Y."/>
            <person name="Abe K."/>
            <person name="Kamihara K."/>
            <person name="Katsuta N."/>
            <person name="Sato K."/>
            <person name="Tanikawa M."/>
            <person name="Yamazaki M."/>
            <person name="Ninomiya K."/>
            <person name="Ishibashi T."/>
            <person name="Yamashita H."/>
            <person name="Murakawa K."/>
            <person name="Fujimori K."/>
            <person name="Tanai H."/>
            <person name="Kimata M."/>
            <person name="Watanabe M."/>
            <person name="Hiraoka S."/>
            <person name="Chiba Y."/>
            <person name="Ishida S."/>
            <person name="Ono Y."/>
            <person name="Takiguchi S."/>
            <person name="Watanabe S."/>
            <person name="Yosida M."/>
            <person name="Hotuta T."/>
            <person name="Kusano J."/>
            <person name="Kanehori K."/>
            <person name="Takahashi-Fujii A."/>
            <person name="Hara H."/>
            <person name="Tanase T.-O."/>
            <person name="Nomura Y."/>
            <person name="Togiya S."/>
            <person name="Komai F."/>
            <person name="Hara R."/>
            <person name="Takeuchi K."/>
            <person name="Arita M."/>
            <person name="Imose N."/>
            <person name="Musashino K."/>
            <person name="Yuuki H."/>
            <person name="Oshima A."/>
            <person name="Sasaki N."/>
            <person name="Aotsuka S."/>
            <person name="Yoshikawa Y."/>
            <person name="Matsunawa H."/>
            <person name="Ichihara T."/>
            <person name="Shiohata N."/>
            <person name="Sano S."/>
            <person name="Moriya S."/>
            <person name="Momiyama H."/>
            <person name="Satoh N."/>
            <person name="Takami S."/>
            <person name="Terashima Y."/>
            <person name="Suzuki O."/>
            <person name="Nakagawa S."/>
            <person name="Senoh A."/>
            <person name="Mizoguchi H."/>
            <person name="Goto Y."/>
            <person name="Shimizu F."/>
            <person name="Wakebe H."/>
            <person name="Hishigaki H."/>
            <person name="Watanabe T."/>
            <person name="Sugiyama A."/>
            <person name="Takemoto M."/>
            <person name="Kawakami B."/>
            <person name="Yamazaki M."/>
            <person name="Watanabe K."/>
            <person name="Kumagai A."/>
            <person name="Itakura S."/>
            <person name="Fukuzumi Y."/>
            <person name="Fujimori Y."/>
            <person name="Komiyama M."/>
            <person name="Tashiro H."/>
            <person name="Tanigami A."/>
            <person name="Fujiwara T."/>
            <person name="Ono T."/>
            <person name="Yamada K."/>
            <person name="Fujii Y."/>
            <person name="Ozaki K."/>
            <person name="Hirao M."/>
            <person name="Ohmori Y."/>
            <person name="Kawabata A."/>
            <person name="Hikiji T."/>
            <person name="Kobatake N."/>
            <person name="Inagaki H."/>
            <person name="Ikema Y."/>
            <person name="Okamoto S."/>
            <person name="Okitani R."/>
            <person name="Kawakami T."/>
            <person name="Noguchi S."/>
            <person name="Itoh T."/>
            <person name="Shigeta K."/>
            <person name="Senba T."/>
            <person name="Matsumura K."/>
            <person name="Nakajima Y."/>
            <person name="Mizuno T."/>
            <person name="Morinaga M."/>
            <person name="Sasaki M."/>
            <person name="Togashi T."/>
            <person name="Oyama M."/>
            <person name="Hata H."/>
            <person name="Watanabe M."/>
            <person name="Komatsu T."/>
            <person name="Mizushima-Sugano J."/>
            <person name="Satoh T."/>
            <person name="Shirai Y."/>
            <person name="Takahashi Y."/>
            <person name="Nakagawa K."/>
            <person name="Okumura K."/>
            <person name="Nagase T."/>
            <person name="Nomura N."/>
            <person name="Kikuchi H."/>
            <person name="Masuho Y."/>
            <person name="Yamashita R."/>
            <person name="Nakai K."/>
            <person name="Yada T."/>
            <person name="Nakamura Y."/>
            <person name="Ohara O."/>
            <person name="Isogai T."/>
            <person name="Sugano S."/>
        </authorList>
    </citation>
    <scope>NUCLEOTIDE SEQUENCE [LARGE SCALE MRNA]</scope>
</reference>
<reference key="4">
    <citation type="journal article" date="2004" name="Nature">
        <title>The DNA sequence and biology of human chromosome 19.</title>
        <authorList>
            <person name="Grimwood J."/>
            <person name="Gordon L.A."/>
            <person name="Olsen A.S."/>
            <person name="Terry A."/>
            <person name="Schmutz J."/>
            <person name="Lamerdin J.E."/>
            <person name="Hellsten U."/>
            <person name="Goodstein D."/>
            <person name="Couronne O."/>
            <person name="Tran-Gyamfi M."/>
            <person name="Aerts A."/>
            <person name="Altherr M."/>
            <person name="Ashworth L."/>
            <person name="Bajorek E."/>
            <person name="Black S."/>
            <person name="Branscomb E."/>
            <person name="Caenepeel S."/>
            <person name="Carrano A.V."/>
            <person name="Caoile C."/>
            <person name="Chan Y.M."/>
            <person name="Christensen M."/>
            <person name="Cleland C.A."/>
            <person name="Copeland A."/>
            <person name="Dalin E."/>
            <person name="Dehal P."/>
            <person name="Denys M."/>
            <person name="Detter J.C."/>
            <person name="Escobar J."/>
            <person name="Flowers D."/>
            <person name="Fotopulos D."/>
            <person name="Garcia C."/>
            <person name="Georgescu A.M."/>
            <person name="Glavina T."/>
            <person name="Gomez M."/>
            <person name="Gonzales E."/>
            <person name="Groza M."/>
            <person name="Hammon N."/>
            <person name="Hawkins T."/>
            <person name="Haydu L."/>
            <person name="Ho I."/>
            <person name="Huang W."/>
            <person name="Israni S."/>
            <person name="Jett J."/>
            <person name="Kadner K."/>
            <person name="Kimball H."/>
            <person name="Kobayashi A."/>
            <person name="Larionov V."/>
            <person name="Leem S.-H."/>
            <person name="Lopez F."/>
            <person name="Lou Y."/>
            <person name="Lowry S."/>
            <person name="Malfatti S."/>
            <person name="Martinez D."/>
            <person name="McCready P.M."/>
            <person name="Medina C."/>
            <person name="Morgan J."/>
            <person name="Nelson K."/>
            <person name="Nolan M."/>
            <person name="Ovcharenko I."/>
            <person name="Pitluck S."/>
            <person name="Pollard M."/>
            <person name="Popkie A.P."/>
            <person name="Predki P."/>
            <person name="Quan G."/>
            <person name="Ramirez L."/>
            <person name="Rash S."/>
            <person name="Retterer J."/>
            <person name="Rodriguez A."/>
            <person name="Rogers S."/>
            <person name="Salamov A."/>
            <person name="Salazar A."/>
            <person name="She X."/>
            <person name="Smith D."/>
            <person name="Slezak T."/>
            <person name="Solovyev V."/>
            <person name="Thayer N."/>
            <person name="Tice H."/>
            <person name="Tsai M."/>
            <person name="Ustaszewska A."/>
            <person name="Vo N."/>
            <person name="Wagner M."/>
            <person name="Wheeler J."/>
            <person name="Wu K."/>
            <person name="Xie G."/>
            <person name="Yang J."/>
            <person name="Dubchak I."/>
            <person name="Furey T.S."/>
            <person name="DeJong P."/>
            <person name="Dickson M."/>
            <person name="Gordon D."/>
            <person name="Eichler E.E."/>
            <person name="Pennacchio L.A."/>
            <person name="Richardson P."/>
            <person name="Stubbs L."/>
            <person name="Rokhsar D.S."/>
            <person name="Myers R.M."/>
            <person name="Rubin E.M."/>
            <person name="Lucas S.M."/>
        </authorList>
    </citation>
    <scope>NUCLEOTIDE SEQUENCE [LARGE SCALE GENOMIC DNA]</scope>
</reference>
<reference key="5">
    <citation type="submission" date="2005-09" db="EMBL/GenBank/DDBJ databases">
        <authorList>
            <person name="Mural R.J."/>
            <person name="Istrail S."/>
            <person name="Sutton G.G."/>
            <person name="Florea L."/>
            <person name="Halpern A.L."/>
            <person name="Mobarry C.M."/>
            <person name="Lippert R."/>
            <person name="Walenz B."/>
            <person name="Shatkay H."/>
            <person name="Dew I."/>
            <person name="Miller J.R."/>
            <person name="Flanigan M.J."/>
            <person name="Edwards N.J."/>
            <person name="Bolanos R."/>
            <person name="Fasulo D."/>
            <person name="Halldorsson B.V."/>
            <person name="Hannenhalli S."/>
            <person name="Turner R."/>
            <person name="Yooseph S."/>
            <person name="Lu F."/>
            <person name="Nusskern D.R."/>
            <person name="Shue B.C."/>
            <person name="Zheng X.H."/>
            <person name="Zhong F."/>
            <person name="Delcher A.L."/>
            <person name="Huson D.H."/>
            <person name="Kravitz S.A."/>
            <person name="Mouchard L."/>
            <person name="Reinert K."/>
            <person name="Remington K.A."/>
            <person name="Clark A.G."/>
            <person name="Waterman M.S."/>
            <person name="Eichler E.E."/>
            <person name="Adams M.D."/>
            <person name="Hunkapiller M.W."/>
            <person name="Myers E.W."/>
            <person name="Venter J.C."/>
        </authorList>
    </citation>
    <scope>NUCLEOTIDE SEQUENCE [LARGE SCALE GENOMIC DNA]</scope>
</reference>
<reference key="6">
    <citation type="journal article" date="2004" name="Genome Res.">
        <title>The status, quality, and expansion of the NIH full-length cDNA project: the Mammalian Gene Collection (MGC).</title>
        <authorList>
            <consortium name="The MGC Project Team"/>
        </authorList>
    </citation>
    <scope>NUCLEOTIDE SEQUENCE [LARGE SCALE MRNA]</scope>
</reference>
<reference key="7">
    <citation type="journal article" date="1995" name="J. Biol. Chem.">
        <title>Acceptor specificity of different length constructs of human recombinant alpha 1,3/4-fucosyltransferases. Replacement of the stem region and the transmembrane domain of fucosyltransferase V by protein A results in an enzyme with GDP-fucose hydrolyzing activity.</title>
        <authorList>
            <person name="de Vries T."/>
            <person name="Srnka C.A."/>
            <person name="Palcic M.M."/>
            <person name="Swiedler S.J."/>
            <person name="van den Eijnden D.H."/>
            <person name="Macher B.A."/>
        </authorList>
    </citation>
    <scope>CATALYTIC ACTIVITY</scope>
    <scope>FUNCTION</scope>
</reference>
<reference key="8">
    <citation type="journal article" date="1998" name="J. Biol. Chem.">
        <title>Human alpha1,3/4-fucosyltransferases. I. Identification of amino acids involved in acceptor substrate binding by site-directed mutagenesis.</title>
        <authorList>
            <person name="Nguyen A.T."/>
            <person name="Holmes E.H."/>
            <person name="Whitaker J.M."/>
            <person name="Ho S."/>
            <person name="Shetterly S."/>
            <person name="Macher B.A."/>
        </authorList>
    </citation>
    <scope>CATALYTIC ACTIVITY</scope>
    <scope>FUNCTION</scope>
    <scope>MUTAGENESIS OF ASN-86; THR-87; PRO-92; ALA-101; ASN-105; SER-110; SER-111 AND ALA-118</scope>
    <scope>BIOPHYSICOCHEMICAL PROPERTIES</scope>
</reference>
<reference key="9">
    <citation type="journal article" date="1998" name="J. Biol. Chem.">
        <title>Human alpha1,3/4-fucosyltransferases. II. A single amino acid at the COOH terminus of FucT III and V alters their kinetic properties.</title>
        <authorList>
            <person name="Vo L."/>
            <person name="Lee S."/>
            <person name="Marcinko M.C."/>
            <person name="Holmes E.H."/>
            <person name="Macher B.A."/>
        </authorList>
    </citation>
    <scope>FUNCTION</scope>
    <scope>BIOPHYSICOCHEMICAL PROPERTIES</scope>
    <scope>CATALYTIC ACTIVITY</scope>
</reference>
<reference key="10">
    <citation type="journal article" date="2004" name="Glycobiology">
        <title>Structure/function study of Lewis alpha3- and alpha3/4-fucosyltransferases: the alpha1,4 fucosylation requires an aromatic residue in the acceptor-binding domain.</title>
        <authorList>
            <person name="Dupuy F."/>
            <person name="Germot A."/>
            <person name="Julien R."/>
            <person name="Maftah A."/>
        </authorList>
    </citation>
    <scope>CATALYTIC ACTIVITY</scope>
    <scope>FUNCTION</scope>
    <scope>MUTAGENESIS OF TRP-124</scope>
    <scope>BIOPHYSICOCHEMICAL PROPERTIES</scope>
</reference>
<reference key="11">
    <citation type="journal article" date="2007" name="J. Biol. Chem.">
        <title>Site-specific fucosylation of sialylated polylactosamines by alpha1,3/4-fucosyltransferases-V and -VI Is defined by amino acids near the N terminus of the catalytic domain.</title>
        <authorList>
            <person name="Shetterly S."/>
            <person name="Jost F."/>
            <person name="Watson S.R."/>
            <person name="Knegtel R."/>
            <person name="Macher B.A."/>
            <person name="Holmes E.H."/>
        </authorList>
    </citation>
    <scope>CATALYTIC ACTIVITY</scope>
    <scope>FUNCTION</scope>
    <scope>MUTAGENESIS OF THR-87; TRP-124; ASP-125 AND ILE-126</scope>
</reference>
<reference key="12">
    <citation type="journal article" date="2018" name="J. Biol. Chem.">
        <title>Distinct human alpha(1,3)-fucosyltransferases drive Lewis-X/sialyl Lewis-X assembly in human cells.</title>
        <authorList>
            <person name="Mondal N."/>
            <person name="Dykstra B."/>
            <person name="Lee J."/>
            <person name="Ashline D.J."/>
            <person name="Reinhold V.N."/>
            <person name="Rossi D.J."/>
            <person name="Sackstein R."/>
        </authorList>
    </citation>
    <scope>FUNCTION</scope>
    <scope>CATALYTIC ACTIVITY</scope>
    <scope>PATHWAY</scope>
</reference>
<organism>
    <name type="scientific">Homo sapiens</name>
    <name type="common">Human</name>
    <dbReference type="NCBI Taxonomy" id="9606"/>
    <lineage>
        <taxon>Eukaryota</taxon>
        <taxon>Metazoa</taxon>
        <taxon>Chordata</taxon>
        <taxon>Craniata</taxon>
        <taxon>Vertebrata</taxon>
        <taxon>Euteleostomi</taxon>
        <taxon>Mammalia</taxon>
        <taxon>Eutheria</taxon>
        <taxon>Euarchontoglires</taxon>
        <taxon>Primates</taxon>
        <taxon>Haplorrhini</taxon>
        <taxon>Catarrhini</taxon>
        <taxon>Hominidae</taxon>
        <taxon>Homo</taxon>
    </lineage>
</organism>
<protein>
    <recommendedName>
        <fullName>4-galactosyl-N-acetylglucosaminide 3-alpha-L-fucosyltransferase FUT5</fullName>
        <ecNumber evidence="6">2.4.1.152</ecNumber>
    </recommendedName>
    <alternativeName>
        <fullName>3-galactosyl-N-acetylglucosaminide 4-alpha-L-fucosyltransferase FUT5</fullName>
        <ecNumber evidence="6">2.4.1.65</ecNumber>
    </alternativeName>
    <alternativeName>
        <fullName>Fucosyltransferase 5</fullName>
    </alternativeName>
    <alternativeName>
        <fullName>Fucosyltransferase V</fullName>
        <shortName evidence="9">Fuc-TV</shortName>
        <shortName>FucT-V</shortName>
    </alternativeName>
    <alternativeName>
        <fullName>Galactoside 3-L-fucosyltransferase</fullName>
    </alternativeName>
</protein>
<sequence>MDPLGPAKPQWLWRRCLAGLLFQLLVAVCFFSYLRVSRDDATGSPRPGLMAVEPVTGAPNGSRCQDSMATPAHPTLLILLWTWPFNTPVALPRCSEMVPGAADCNITADSSVYPQADAVIVHHWDIMYNPSANLPPPTRPQGQRWIWFSMESPSNCRHLEALDGYFNLTMSYRSDSDIFTPYGWLEPWSGQPAHPPLNLSAKTELVAWAVSNWKPDSARVRYYQSLQAHLKVDVYGRSHKPLPKGTMMETLSRYKFYLAFENSLHPDYITEKLWRNALEAWAVPVVLGPSRSNYERFLPPDAFIHVDDFQSPKDLARYLQELDKDHARYLSYFHWRETLRPRSFSWALAFCKACWKLQQESRYQTVRSIAAWFT</sequence>
<proteinExistence type="evidence at protein level"/>
<name>FUT5_HUMAN</name>
<gene>
    <name evidence="14" type="primary">FUT5</name>
</gene>
<keyword id="KW-0325">Glycoprotein</keyword>
<keyword id="KW-0328">Glycosyltransferase</keyword>
<keyword id="KW-0333">Golgi apparatus</keyword>
<keyword id="KW-0443">Lipid metabolism</keyword>
<keyword id="KW-0472">Membrane</keyword>
<keyword id="KW-1185">Reference proteome</keyword>
<keyword id="KW-0735">Signal-anchor</keyword>
<keyword id="KW-0808">Transferase</keyword>
<keyword id="KW-0812">Transmembrane</keyword>
<keyword id="KW-1133">Transmembrane helix</keyword>
<accession>Q11128</accession>
<accession>A8K4X2</accession>
<accession>K7ENC0</accession>
<dbReference type="EC" id="2.4.1.152" evidence="6"/>
<dbReference type="EC" id="2.4.1.65" evidence="6"/>
<dbReference type="EMBL" id="M81485">
    <property type="protein sequence ID" value="AAA98117.1"/>
    <property type="molecule type" value="Genomic_DNA"/>
</dbReference>
<dbReference type="EMBL" id="U27329">
    <property type="protein sequence ID" value="AAC50188.1"/>
    <property type="molecule type" value="mRNA"/>
</dbReference>
<dbReference type="EMBL" id="U27330">
    <property type="protein sequence ID" value="AAC50189.1"/>
    <property type="molecule type" value="mRNA"/>
</dbReference>
<dbReference type="EMBL" id="AK291087">
    <property type="protein sequence ID" value="BAF83776.1"/>
    <property type="molecule type" value="mRNA"/>
</dbReference>
<dbReference type="EMBL" id="AC024592">
    <property type="status" value="NOT_ANNOTATED_CDS"/>
    <property type="molecule type" value="Genomic_DNA"/>
</dbReference>
<dbReference type="EMBL" id="CH471139">
    <property type="protein sequence ID" value="EAW69134.1"/>
    <property type="molecule type" value="Genomic_DNA"/>
</dbReference>
<dbReference type="EMBL" id="BC140905">
    <property type="protein sequence ID" value="AAI40906.1"/>
    <property type="molecule type" value="mRNA"/>
</dbReference>
<dbReference type="CCDS" id="CCDS12154.1"/>
<dbReference type="PIR" id="A42270">
    <property type="entry name" value="A42270"/>
</dbReference>
<dbReference type="RefSeq" id="NP_002025.2">
    <property type="nucleotide sequence ID" value="NM_002034.2"/>
</dbReference>
<dbReference type="SMR" id="Q11128"/>
<dbReference type="FunCoup" id="Q11128">
    <property type="interactions" value="286"/>
</dbReference>
<dbReference type="STRING" id="9606.ENSP00000466880"/>
<dbReference type="BindingDB" id="Q11128"/>
<dbReference type="ChEMBL" id="CHEMBL3146"/>
<dbReference type="SwissLipids" id="SLP:000001430"/>
<dbReference type="CAZy" id="GT10">
    <property type="family name" value="Glycosyltransferase Family 10"/>
</dbReference>
<dbReference type="GlyCosmos" id="Q11128">
    <property type="glycosylation" value="4 sites, No reported glycans"/>
</dbReference>
<dbReference type="GlyGen" id="Q11128">
    <property type="glycosylation" value="5 sites"/>
</dbReference>
<dbReference type="iPTMnet" id="Q11128"/>
<dbReference type="PhosphoSitePlus" id="Q11128"/>
<dbReference type="BioMuta" id="FUT5"/>
<dbReference type="DMDM" id="1730135"/>
<dbReference type="jPOST" id="Q11128"/>
<dbReference type="MassIVE" id="Q11128"/>
<dbReference type="PaxDb" id="9606-ENSP00000466880"/>
<dbReference type="PeptideAtlas" id="Q11128"/>
<dbReference type="PRIDE" id="Q11128"/>
<dbReference type="ProteomicsDB" id="58871"/>
<dbReference type="Pumba" id="Q11128"/>
<dbReference type="Antibodypedia" id="24015">
    <property type="antibodies" value="38 antibodies from 11 providers"/>
</dbReference>
<dbReference type="DNASU" id="2527"/>
<dbReference type="Ensembl" id="ENST00000252675.6">
    <property type="protein sequence ID" value="ENSP00000252675.5"/>
    <property type="gene ID" value="ENSG00000130383.7"/>
</dbReference>
<dbReference type="Ensembl" id="ENST00000588525.1">
    <property type="protein sequence ID" value="ENSP00000466880.1"/>
    <property type="gene ID" value="ENSG00000130383.7"/>
</dbReference>
<dbReference type="GeneID" id="2527"/>
<dbReference type="KEGG" id="hsa:2527"/>
<dbReference type="MANE-Select" id="ENST00000588525.1">
    <property type="protein sequence ID" value="ENSP00000466880.1"/>
    <property type="RefSeq nucleotide sequence ID" value="NM_002034.2"/>
    <property type="RefSeq protein sequence ID" value="NP_002025.2"/>
</dbReference>
<dbReference type="UCSC" id="uc060sei.1">
    <property type="organism name" value="human"/>
</dbReference>
<dbReference type="AGR" id="HGNC:4016"/>
<dbReference type="CTD" id="2527"/>
<dbReference type="DisGeNET" id="2527"/>
<dbReference type="GeneCards" id="FUT5"/>
<dbReference type="HGNC" id="HGNC:4016">
    <property type="gene designation" value="FUT5"/>
</dbReference>
<dbReference type="HPA" id="ENSG00000130383">
    <property type="expression patterns" value="Not detected"/>
</dbReference>
<dbReference type="MIM" id="136835">
    <property type="type" value="gene"/>
</dbReference>
<dbReference type="neXtProt" id="NX_Q11128"/>
<dbReference type="OpenTargets" id="ENSG00000130383"/>
<dbReference type="PharmGKB" id="PA28432"/>
<dbReference type="VEuPathDB" id="HostDB:ENSG00000130383"/>
<dbReference type="eggNOG" id="KOG2619">
    <property type="taxonomic scope" value="Eukaryota"/>
</dbReference>
<dbReference type="GeneTree" id="ENSGT00940000163389"/>
<dbReference type="HOGENOM" id="CLU_032075_4_1_1"/>
<dbReference type="InParanoid" id="Q11128"/>
<dbReference type="OMA" id="FHVRNMN"/>
<dbReference type="OrthoDB" id="427096at2759"/>
<dbReference type="PAN-GO" id="Q11128">
    <property type="GO annotations" value="2 GO annotations based on evolutionary models"/>
</dbReference>
<dbReference type="PhylomeDB" id="Q11128"/>
<dbReference type="TreeFam" id="TF316348"/>
<dbReference type="BioCyc" id="MetaCyc:HS05379-MONOMER"/>
<dbReference type="BRENDA" id="2.4.1.152">
    <property type="organism ID" value="2681"/>
</dbReference>
<dbReference type="BRENDA" id="2.4.1.65">
    <property type="organism ID" value="2681"/>
</dbReference>
<dbReference type="PathwayCommons" id="Q11128"/>
<dbReference type="Reactome" id="R-HSA-9037629">
    <property type="pathway name" value="Lewis blood group biosynthesis"/>
</dbReference>
<dbReference type="UniPathway" id="UPA00378"/>
<dbReference type="BioGRID-ORCS" id="2527">
    <property type="hits" value="13 hits in 1129 CRISPR screens"/>
</dbReference>
<dbReference type="GeneWiki" id="FUT5"/>
<dbReference type="GenomeRNAi" id="2527"/>
<dbReference type="Pharos" id="Q11128">
    <property type="development level" value="Tbio"/>
</dbReference>
<dbReference type="PRO" id="PR:Q11128"/>
<dbReference type="Proteomes" id="UP000005640">
    <property type="component" value="Chromosome 19"/>
</dbReference>
<dbReference type="RNAct" id="Q11128">
    <property type="molecule type" value="protein"/>
</dbReference>
<dbReference type="Bgee" id="ENSG00000130383">
    <property type="expression patterns" value="Expressed in lower esophagus mucosa and 27 other cell types or tissues"/>
</dbReference>
<dbReference type="ExpressionAtlas" id="Q11128">
    <property type="expression patterns" value="baseline and differential"/>
</dbReference>
<dbReference type="GO" id="GO:0005794">
    <property type="term" value="C:Golgi apparatus"/>
    <property type="evidence" value="ECO:0000304"/>
    <property type="project" value="UniProtKB"/>
</dbReference>
<dbReference type="GO" id="GO:0032580">
    <property type="term" value="C:Golgi cisterna membrane"/>
    <property type="evidence" value="ECO:0007669"/>
    <property type="project" value="UniProtKB-SubCell"/>
</dbReference>
<dbReference type="GO" id="GO:0000139">
    <property type="term" value="C:Golgi membrane"/>
    <property type="evidence" value="ECO:0000304"/>
    <property type="project" value="Reactome"/>
</dbReference>
<dbReference type="GO" id="GO:0017060">
    <property type="term" value="F:3-galactosyl-N-acetylglucosaminide 4-alpha-L-fucosyltransferase activity"/>
    <property type="evidence" value="ECO:0000314"/>
    <property type="project" value="UniProtKB"/>
</dbReference>
<dbReference type="GO" id="GO:0017083">
    <property type="term" value="F:4-galactosyl-N-acetylglucosaminide 3-alpha-L-fucosyltransferase activity"/>
    <property type="evidence" value="ECO:0000314"/>
    <property type="project" value="UniProtKB"/>
</dbReference>
<dbReference type="GO" id="GO:0046920">
    <property type="term" value="F:alpha-(1-&gt;3)-fucosyltransferase activity"/>
    <property type="evidence" value="ECO:0000318"/>
    <property type="project" value="GO_Central"/>
</dbReference>
<dbReference type="GO" id="GO:0008417">
    <property type="term" value="F:fucosyltransferase activity"/>
    <property type="evidence" value="ECO:0000314"/>
    <property type="project" value="BHF-UCL"/>
</dbReference>
<dbReference type="GO" id="GO:0005975">
    <property type="term" value="P:carbohydrate metabolic process"/>
    <property type="evidence" value="ECO:0000304"/>
    <property type="project" value="ProtInc"/>
</dbReference>
<dbReference type="GO" id="GO:0006672">
    <property type="term" value="P:ceramide metabolic process"/>
    <property type="evidence" value="ECO:0000314"/>
    <property type="project" value="UniProtKB"/>
</dbReference>
<dbReference type="GO" id="GO:0036065">
    <property type="term" value="P:fucosylation"/>
    <property type="evidence" value="ECO:0000318"/>
    <property type="project" value="GO_Central"/>
</dbReference>
<dbReference type="GO" id="GO:0042355">
    <property type="term" value="P:L-fucose catabolic process"/>
    <property type="evidence" value="ECO:0000303"/>
    <property type="project" value="UniProtKB"/>
</dbReference>
<dbReference type="GO" id="GO:0009312">
    <property type="term" value="P:oligosaccharide biosynthetic process"/>
    <property type="evidence" value="ECO:0000304"/>
    <property type="project" value="Reactome"/>
</dbReference>
<dbReference type="GO" id="GO:0009311">
    <property type="term" value="P:oligosaccharide metabolic process"/>
    <property type="evidence" value="ECO:0000314"/>
    <property type="project" value="UniProtKB"/>
</dbReference>
<dbReference type="GO" id="GO:0006486">
    <property type="term" value="P:protein glycosylation"/>
    <property type="evidence" value="ECO:0000304"/>
    <property type="project" value="UniProtKB"/>
</dbReference>
<dbReference type="GO" id="GO:0006487">
    <property type="term" value="P:protein N-linked glycosylation"/>
    <property type="evidence" value="ECO:0000314"/>
    <property type="project" value="UniProtKB"/>
</dbReference>
<dbReference type="GO" id="GO:0006493">
    <property type="term" value="P:protein O-linked glycosylation"/>
    <property type="evidence" value="ECO:0000314"/>
    <property type="project" value="UniProtKB"/>
</dbReference>
<dbReference type="FunFam" id="3.40.50.11660:FF:000001">
    <property type="entry name" value="alpha-(1,3)-fucosyltransferase 9"/>
    <property type="match status" value="1"/>
</dbReference>
<dbReference type="Gene3D" id="3.40.50.11660">
    <property type="entry name" value="Glycosyl transferase family 10, C-terminal domain"/>
    <property type="match status" value="1"/>
</dbReference>
<dbReference type="InterPro" id="IPR055270">
    <property type="entry name" value="Glyco_tran_10_C"/>
</dbReference>
<dbReference type="InterPro" id="IPR031481">
    <property type="entry name" value="Glyco_tran_10_N"/>
</dbReference>
<dbReference type="InterPro" id="IPR001503">
    <property type="entry name" value="Glyco_trans_10"/>
</dbReference>
<dbReference type="InterPro" id="IPR038577">
    <property type="entry name" value="GT10-like_C_sf"/>
</dbReference>
<dbReference type="PANTHER" id="PTHR11929:SF11">
    <property type="entry name" value="4-GALACTOSYL-N-ACETYLGLUCOSAMINIDE 3-ALPHA-L-FUCOSYLTRANSFERASE FUT5"/>
    <property type="match status" value="1"/>
</dbReference>
<dbReference type="PANTHER" id="PTHR11929">
    <property type="entry name" value="ALPHA- 1,3 -FUCOSYLTRANSFERASE"/>
    <property type="match status" value="1"/>
</dbReference>
<dbReference type="Pfam" id="PF17039">
    <property type="entry name" value="Glyco_tran_10_N"/>
    <property type="match status" value="1"/>
</dbReference>
<dbReference type="Pfam" id="PF00852">
    <property type="entry name" value="Glyco_transf_10"/>
    <property type="match status" value="1"/>
</dbReference>
<dbReference type="SUPFAM" id="SSF53756">
    <property type="entry name" value="UDP-Glycosyltransferase/glycogen phosphorylase"/>
    <property type="match status" value="1"/>
</dbReference>
<comment type="function">
    <text evidence="2 3 4 6 7 8">Catalyzes preferentially the transfer of L-fucose, from a guanosine diphosphate-beta-L-fucose, to the N-acetyl-beta-D-glucosamine (GlcNAc) of an N-acetyllactosamine unit (type 2 chain) of an oligosaccharide, or a glycoprotein- and a glycolipid-linked N-acetyllactosamine unit via an alpha (1,3) linkage and participates in the surface expression of VIM-2, Lewis X/SSEA-1 and sialyl Lewis X antigens (PubMed:14718375, PubMed:1740457, PubMed:17604274, PubMed:29593094, PubMed:7721776, PubMed:9737988, PubMed:9737989). Preferentially transfers fucose to the GlcNAc of an internal N-acetyllactosamine unit of a poly-N-acetyllactosamine chain acceptor substrate (PubMed:17604274, PubMed:7721776). Also catalyzes to a lesser extend the transfer of L-fucose to the GlcNAc of a type 1 (beta-D-galactosyl-(1-&gt;3)-N-acetyl-beta-D-glucosaminyl) or H-type 1 (alpha-L-Fuc-(1-&gt;2)-beta-D-Gal-(1-&gt;3)-D-GlcNAc) chain oligosaccharide via an alpha (1,4) linkage (PubMed:14718375, PubMed:1740457, PubMed:17604274, PubMed:7721776, PubMed:9737988). Preferentially catalyzes sialylated type 2 oligosaccharide acceptors over neutral type 2 or H type 2 (alpha-L-Fuc-(1-&gt;2)-beta-D-Gal-(1-&gt;4)-D-GlcNAc) oligosaccharide acceptors (PubMed:1740457, PubMed:9737989). Lactose-based structures are also acceptor substrates (PubMed:1740457, PubMed:7721776).</text>
</comment>
<comment type="catalytic activity">
    <reaction evidence="6">
        <text>a beta-D-galactosyl-(1-&gt;3)-N-acetyl-beta-D-glucosaminyl derivative + GDP-beta-L-fucose = a beta-D-galactosyl-(1-&gt;3)-[alpha-L-fucosyl-(1-&gt;4)]-N-acetyl-beta-D-glucosaminyl derivative + GDP + H(+)</text>
        <dbReference type="Rhea" id="RHEA:23628"/>
        <dbReference type="ChEBI" id="CHEBI:15378"/>
        <dbReference type="ChEBI" id="CHEBI:57273"/>
        <dbReference type="ChEBI" id="CHEBI:58189"/>
        <dbReference type="ChEBI" id="CHEBI:133506"/>
        <dbReference type="ChEBI" id="CHEBI:140304"/>
        <dbReference type="EC" id="2.4.1.65"/>
    </reaction>
    <physiologicalReaction direction="left-to-right" evidence="12">
        <dbReference type="Rhea" id="RHEA:23629"/>
    </physiologicalReaction>
</comment>
<comment type="catalytic activity">
    <reaction evidence="5">
        <text>an N-acetyl-alpha-neuraminyl-(2-&gt;3)-beta-D-galactosyl-(1-&gt;4)-N-acetyl-beta-D-glucosaminyl derivative + GDP-beta-L-fucose = an alpha-Neu5Ac-(2-&gt;3)-beta-D-Gal-(1-&gt;4)-[alpha-L-Fuc-(1-&gt;3)]-beta-D-GlcNAc derivative + GDP + H(+)</text>
        <dbReference type="Rhea" id="RHEA:56076"/>
        <dbReference type="ChEBI" id="CHEBI:15378"/>
        <dbReference type="ChEBI" id="CHEBI:57273"/>
        <dbReference type="ChEBI" id="CHEBI:58189"/>
        <dbReference type="ChEBI" id="CHEBI:136545"/>
        <dbReference type="ChEBI" id="CHEBI:139509"/>
    </reaction>
    <physiologicalReaction direction="left-to-right" evidence="11">
        <dbReference type="Rhea" id="RHEA:56077"/>
    </physiologicalReaction>
</comment>
<comment type="catalytic activity">
    <reaction evidence="5">
        <text>an alpha-Neu5Ac-(2-&gt;3)-beta-D-Gal-(1-&gt;4)-beta-D-GlcNAc-(1-&gt;3)-beta-D-Gal-(1-&gt;4)-[alpha-L-Fuc-(1-&gt;3)]-beta-D-GlcNAc derivative + GDP-beta-L-fucose = an alpha-Neu5Ac-(2-&gt;3)-beta-D-Gal-(1-&gt;4)-[alpha-L-Fuc-(1-&gt;3)]-beta-D-GlcNAc-(1-&gt;3)-beta-D-Gal-(1-&gt;4)-[alpha-L-Fuc-(1-&gt;3)]-beta-D-GlcNAc derivative + GDP + H(+)</text>
        <dbReference type="Rhea" id="RHEA:52864"/>
        <dbReference type="ChEBI" id="CHEBI:15378"/>
        <dbReference type="ChEBI" id="CHEBI:57273"/>
        <dbReference type="ChEBI" id="CHEBI:58189"/>
        <dbReference type="ChEBI" id="CHEBI:145342"/>
        <dbReference type="ChEBI" id="CHEBI:145343"/>
    </reaction>
    <physiologicalReaction direction="left-to-right" evidence="11">
        <dbReference type="Rhea" id="RHEA:52865"/>
    </physiologicalReaction>
</comment>
<comment type="catalytic activity">
    <reaction evidence="5 6">
        <text>a beta-D-galactosyl-(1-&gt;4)-N-acetyl-beta-D-glucosaminyl derivative + GDP-beta-L-fucose = a beta-D-galactosyl-(1-&gt;4)-[alpha-L-fucosyl-(1-&gt;3)]-N-acetyl-beta-D-glucosaminyl derivative + GDP + H(+)</text>
        <dbReference type="Rhea" id="RHEA:14257"/>
        <dbReference type="ChEBI" id="CHEBI:15378"/>
        <dbReference type="ChEBI" id="CHEBI:57273"/>
        <dbReference type="ChEBI" id="CHEBI:58189"/>
        <dbReference type="ChEBI" id="CHEBI:133507"/>
        <dbReference type="ChEBI" id="CHEBI:137941"/>
        <dbReference type="EC" id="2.4.1.152"/>
    </reaction>
    <physiologicalReaction direction="left-to-right" evidence="11 12">
        <dbReference type="Rhea" id="RHEA:14258"/>
    </physiologicalReaction>
</comment>
<comment type="catalytic activity">
    <reaction evidence="6 7">
        <text>a neolactoside nLc4Cer + GDP-beta-L-fucose = a neolactoside III(3)-alpha-Fuc-nLc4Cer + GDP + H(+)</text>
        <dbReference type="Rhea" id="RHEA:48376"/>
        <dbReference type="ChEBI" id="CHEBI:15378"/>
        <dbReference type="ChEBI" id="CHEBI:57273"/>
        <dbReference type="ChEBI" id="CHEBI:58189"/>
        <dbReference type="ChEBI" id="CHEBI:90376"/>
        <dbReference type="ChEBI" id="CHEBI:90379"/>
    </reaction>
    <physiologicalReaction direction="left-to-right" evidence="12">
        <dbReference type="Rhea" id="RHEA:48377"/>
    </physiologicalReaction>
</comment>
<comment type="catalytic activity">
    <reaction evidence="4 6">
        <text>a neolactoside nLc6Cer + GDP-beta-L-fucose = beta-D-galactosyl-(1-&gt;4)-N-acetyl-beta-D-glucosaminyl-(1-&gt;3)-beta-D-galactosyl-(1-&gt;4)-[alpha-L-fucosyl-(1-&gt;3)]-N-acetyl-beta-D-glucosaminyl-(1-&gt;3)-beta-D-galactosyl-(1-&gt;4)-beta-D-glucosyl-(1&lt;-&gt;1')-ceramide + GDP + H(+)</text>
        <dbReference type="Rhea" id="RHEA:48364"/>
        <dbReference type="ChEBI" id="CHEBI:15378"/>
        <dbReference type="ChEBI" id="CHEBI:57273"/>
        <dbReference type="ChEBI" id="CHEBI:58189"/>
        <dbReference type="ChEBI" id="CHEBI:90357"/>
        <dbReference type="ChEBI" id="CHEBI:90358"/>
    </reaction>
    <physiologicalReaction direction="left-to-right" evidence="12">
        <dbReference type="Rhea" id="RHEA:48365"/>
    </physiologicalReaction>
</comment>
<comment type="catalytic activity">
    <reaction evidence="6">
        <text>a neolactoside nLc6Cer(d18:1(4E)) + GDP-beta-L-fucose = a neolactoside III(3)-alpha-Fuc-nLc6Cer(d18:1(4E)) + GDP + H(+)</text>
        <dbReference type="Rhea" id="RHEA:48336"/>
        <dbReference type="ChEBI" id="CHEBI:15378"/>
        <dbReference type="ChEBI" id="CHEBI:57273"/>
        <dbReference type="ChEBI" id="CHEBI:58189"/>
        <dbReference type="ChEBI" id="CHEBI:61610"/>
        <dbReference type="ChEBI" id="CHEBI:90307"/>
    </reaction>
    <physiologicalReaction direction="left-to-right" evidence="12">
        <dbReference type="Rhea" id="RHEA:48337"/>
    </physiologicalReaction>
</comment>
<comment type="catalytic activity">
    <reaction evidence="6">
        <text>a neolactoside nLc4Cer(d18:1(4E)) + GDP-beta-L-fucose = a neolactoside III(3)-alpha-Fuc-nLc4Cer(d18:1(4E)) + GDP + H(+)</text>
        <dbReference type="Rhea" id="RHEA:48332"/>
        <dbReference type="ChEBI" id="CHEBI:15378"/>
        <dbReference type="ChEBI" id="CHEBI:17006"/>
        <dbReference type="ChEBI" id="CHEBI:57273"/>
        <dbReference type="ChEBI" id="CHEBI:58189"/>
        <dbReference type="ChEBI" id="CHEBI:77240"/>
    </reaction>
    <physiologicalReaction direction="left-to-right" evidence="12">
        <dbReference type="Rhea" id="RHEA:48333"/>
    </physiologicalReaction>
</comment>
<comment type="catalytic activity">
    <reaction evidence="4 6">
        <text>a neolactoside VI(3)-alpha-NeuNAc-nLc6Cer + GDP-beta-L-fucose = a neolactoside VI(3)-alpha-NeuAc,III(3)-alphaFuc-nLc6Cer + GDP + H(+)</text>
        <dbReference type="Rhea" id="RHEA:48352"/>
        <dbReference type="ChEBI" id="CHEBI:15378"/>
        <dbReference type="ChEBI" id="CHEBI:57273"/>
        <dbReference type="ChEBI" id="CHEBI:58189"/>
        <dbReference type="ChEBI" id="CHEBI:90335"/>
        <dbReference type="ChEBI" id="CHEBI:90339"/>
    </reaction>
    <physiologicalReaction direction="left-to-right" evidence="12">
        <dbReference type="Rhea" id="RHEA:48353"/>
    </physiologicalReaction>
</comment>
<comment type="catalytic activity">
    <reaction evidence="3 6 7 8">
        <text>beta-D-galactosyl-(1-&gt;4)-N-acetyl-D-glucosamine + GDP-beta-L-fucose = beta-D-galactosyl-(1-&gt;4)-[alpha-L-fucosyl-(1-&gt;3)]-N-acetyl-D-glucosamine + GDP + H(+)</text>
        <dbReference type="Rhea" id="RHEA:62824"/>
        <dbReference type="ChEBI" id="CHEBI:15378"/>
        <dbReference type="ChEBI" id="CHEBI:57273"/>
        <dbReference type="ChEBI" id="CHEBI:58189"/>
        <dbReference type="ChEBI" id="CHEBI:60152"/>
        <dbReference type="ChEBI" id="CHEBI:62287"/>
    </reaction>
    <physiologicalReaction direction="left-to-right" evidence="12 13">
        <dbReference type="Rhea" id="RHEA:62825"/>
    </physiologicalReaction>
</comment>
<comment type="catalytic activity">
    <reaction evidence="3 6 8">
        <text>N-acetyl-alpha-neuraminosyl-(2-&gt;3)-beta-D-galactosyl-(1-&gt;4)-N-acetyl-beta-D-glucosamine + GDP-beta-L-fucose = N-acetyl-alpha-neuraminosyl-(2-&gt;3)-beta-D-galactosyl-(1-&gt;4)-[alpha-L-fucosyl-(1-&gt;3)]-N-acetyl-beta-D-glucosamine + GDP + H(+)</text>
        <dbReference type="Rhea" id="RHEA:62836"/>
        <dbReference type="ChEBI" id="CHEBI:15378"/>
        <dbReference type="ChEBI" id="CHEBI:57273"/>
        <dbReference type="ChEBI" id="CHEBI:58189"/>
        <dbReference type="ChEBI" id="CHEBI:145937"/>
        <dbReference type="ChEBI" id="CHEBI:145938"/>
    </reaction>
    <physiologicalReaction direction="left-to-right" evidence="12">
        <dbReference type="Rhea" id="RHEA:62837"/>
    </physiologicalReaction>
</comment>
<comment type="catalytic activity">
    <reaction evidence="8">
        <text>alpha-L-Fuc-(1-&gt;2)-beta-D-Gal-(1-&gt;4)-D-GlcNAc + GDP-beta-L-fucose = alpha-L-Fuc-(1-&gt;2)-beta-D-Gal-(1-&gt;4)-[alpha-L-Fuc-(1-&gt;3)]-D-GlcNAc + GDP + H(+)</text>
        <dbReference type="Rhea" id="RHEA:62900"/>
        <dbReference type="ChEBI" id="CHEBI:15378"/>
        <dbReference type="ChEBI" id="CHEBI:57273"/>
        <dbReference type="ChEBI" id="CHEBI:58189"/>
        <dbReference type="ChEBI" id="CHEBI:62263"/>
        <dbReference type="ChEBI" id="CHEBI:62507"/>
    </reaction>
</comment>
<comment type="catalytic activity">
    <reaction evidence="6">
        <text>an alpha-Neu5Ac-(2-&gt;3)-beta-D-Gal-(1-&gt;3)-D-GlcNAc derivative + GDP-beta-L-fucose = an alpha-Neu5Ac-(2-&gt;3)-beta-D-Gal-(1-&gt;3)-[alpha-L-Fuc-(1-&gt;4)]-beta-D-GlcNAc derivative + GDP + H(+)</text>
        <dbReference type="Rhea" id="RHEA:62904"/>
        <dbReference type="ChEBI" id="CHEBI:15378"/>
        <dbReference type="ChEBI" id="CHEBI:57273"/>
        <dbReference type="ChEBI" id="CHEBI:58189"/>
        <dbReference type="ChEBI" id="CHEBI:146021"/>
        <dbReference type="ChEBI" id="CHEBI:146022"/>
    </reaction>
    <physiologicalReaction direction="left-to-right" evidence="12">
        <dbReference type="Rhea" id="RHEA:62905"/>
    </physiologicalReaction>
</comment>
<comment type="biophysicochemical properties">
    <kinetics>
        <KM evidence="2">38 uM for GDP-fucose</KM>
        <KM evidence="2">1.1 uM for alpha-L-Fuc-(1-&gt;2)-beta-D-Gal-(1-&gt;4)-D-GlcNAc-sp-biotin</KM>
        <KM evidence="8">18.8 uM for GDP-fucose</KM>
        <KM evidence="7">60 mM for beta-D-galactosyl-(1-&gt;3)-N-acetyl-D-glucosamine</KM>
        <KM evidence="7">3.4 mM for beta-D-galactosyl-(1-&gt;4)-N-acetyl-D-glucosamine</KM>
        <Vmax evidence="2">1.0 nmol/h/mg enzyme toward GDP-fucose</Vmax>
        <Vmax evidence="2">38.0 nmol/h/mg enzyme toward alpha-L-Fuc-(1-&gt;2)-beta-D-Gal-(1-&gt;4)-D-GlcNAc-sp-biotin</Vmax>
        <text evidence="7 8">kcat is 1.70 min(-1) for the alpha-L-Fuc-(1-&gt;2)-beta-D-Gal-(1-&gt;4)-D-GlcNAc (PubMed:9737989). kcat is 9.3 min(-1) for the beta-D-galactosyl-(1-&gt;4)-N-acetyl-D-glucosamine (PubMed:9737988).</text>
    </kinetics>
</comment>
<comment type="pathway">
    <text evidence="5 6">Protein modification; protein glycosylation.</text>
</comment>
<comment type="subcellular location">
    <subcellularLocation>
        <location>Golgi apparatus</location>
        <location>Golgi stack membrane</location>
        <topology>Single-pass type II membrane protein</topology>
    </subcellularLocation>
    <text>Membrane-bound form in trans cisternae of Golgi.</text>
</comment>
<comment type="tissue specificity">
    <text>Liver, colon and testis and trace amounts in T-cells and brain.</text>
</comment>
<comment type="similarity">
    <text evidence="10">Belongs to the glycosyltransferase 10 family.</text>
</comment>
<comment type="online information" name="Functional Glycomics Gateway - GTase">
    <link uri="http://www.functionalglycomics.org/glycomics/molecule/jsp/glycoEnzyme/viewGlycoEnzyme.jsp?gbpId=gt_hum_602"/>
    <text>Fucosyltransferase 5</text>
</comment>
<feature type="chain" id="PRO_0000221105" description="4-galactosyl-N-acetylglucosaminide 3-alpha-L-fucosyltransferase FUT5">
    <location>
        <begin position="1"/>
        <end position="374"/>
    </location>
</feature>
<feature type="topological domain" description="Cytoplasmic" evidence="1">
    <location>
        <begin position="1"/>
        <end position="15"/>
    </location>
</feature>
<feature type="transmembrane region" description="Helical; Signal-anchor for type II membrane protein" evidence="1">
    <location>
        <begin position="16"/>
        <end position="34"/>
    </location>
</feature>
<feature type="topological domain" description="Lumenal" evidence="1">
    <location>
        <begin position="35"/>
        <end position="374"/>
    </location>
</feature>
<feature type="glycosylation site" description="N-linked (GlcNAc...) asparagine" evidence="1">
    <location>
        <position position="60"/>
    </location>
</feature>
<feature type="glycosylation site" description="N-linked (GlcNAc...) asparagine" evidence="1">
    <location>
        <position position="105"/>
    </location>
</feature>
<feature type="glycosylation site" description="N-linked (GlcNAc...) asparagine" evidence="1">
    <location>
        <position position="167"/>
    </location>
</feature>
<feature type="glycosylation site" description="N-linked (GlcNAc...) asparagine" evidence="1">
    <location>
        <position position="198"/>
    </location>
</feature>
<feature type="sequence variant" id="VAR_022122" description="In dbSNP:rs778970.">
    <original>P</original>
    <variation>L</variation>
    <location>
        <position position="187"/>
    </location>
</feature>
<feature type="sequence variant" id="VAR_055845" description="In dbSNP:rs4807054.">
    <original>T</original>
    <variation>M</variation>
    <location>
        <position position="338"/>
    </location>
</feature>
<feature type="mutagenesis site" description="Does not affect 4-galactosyl-N-acetylglucosaminide 3-alpha-L-fucosyltransferase activity with type 2 oligosaccharide acceptor; when associated with I-87 and S-92. Increases significantly 3-galactosyl-N-acetylglucosaminide 4-alpha-L-fucosyltransferase activity with type 1 oligosaccharide acceptors; when associated with I-87 and S-92. Decreases of 50% the 4-galactosyl-N-acetylglucosaminide 3-alpha-L-fucosyltransferase activity with type 2 glycolipid nLc4Cer; when associated with I-87 and S-92. Increases significantly the 3-galactosyl-N-acetylglucosaminide 4-alpha-L-fucosyltransferase activity with type 1 glycolipid Lc4Cer; when associated with I-87 and S-92." evidence="7">
    <original>N</original>
    <variation>H</variation>
    <location>
        <position position="86"/>
    </location>
</feature>
<feature type="mutagenesis site" description="Does not affect 4-galactosyl-N-acetylglucosaminide 3-alpha-L-fucosyltransferase activity; when associated with H-86 and S-92. Increases significantly 3-galactosyl-N-acetylglucosaminide 4-alpha-L-fucosyltransferase activity; when associated with H-86 and S-92. Decreases of 50% the 4-galactosyl-N-acetylglucosaminide 3-alpha-L-fucosyltransferase activity with type 2 glycolipid nLc4Cer; when associated with H-86 and S-92. Increases significantly the 3-galactosyl-N-acetylglucosaminide 4-alpha-L-fucosyltransferase activity with type 1 glycolipid Lc4Cer; when associated with H-86 and S-92." evidence="7">
    <original>T</original>
    <variation>I</variation>
    <location>
        <position position="87"/>
    </location>
</feature>
<feature type="mutagenesis site" description="Reverses the preferential fucosylation properties leading to production of 72% of sialyl-lewis x; when associated with R-124; E-125 and V-126. Significantly decreases cell-surface expression of VIM2 antigen; when associated with R-124; E-125 and V-126." evidence="4">
    <original>T</original>
    <variation>K</variation>
    <location>
        <position position="87"/>
    </location>
</feature>
<feature type="mutagenesis site" description="Does not affect 4-galactosyl-N-acetylglucosaminide 3-alpha-L-fucosyltransferase activity; when associated with H-86 and I-87. Increases significantly 3-galactosyl-N-acetylglucosaminide 4-alpha-L-fucosyltransferase activity; when associated with H-86 and I-87. Decreases of 50% the 4-galactosyl-N-acetylglucosaminide 3-alpha-L-fucosyltransferase activity with type 2 glycolipid nLc4Cer; when associated with H-86 and I-87. Increases significantly the 3-galactosyl-N-acetylglucosaminide 4-alpha-L-fucosyltransferase activity with type 1 glycolipid Lc4Cer; when associated with H-86 and I-87." evidence="7">
    <original>P</original>
    <variation>S</variation>
    <location>
        <position position="92"/>
    </location>
</feature>
<feature type="mutagenesis site" description="Does not affect 4-galactosyl-N-acetylglucosaminide 3-alpha-L- and 3-galactosyl-N-acetylglucosaminide 4-alpha-L-fucosyltransferase activity; when associated withH-105; R-110; K-111 and T-118." evidence="7">
    <original>A</original>
    <variation>T</variation>
    <location>
        <position position="101"/>
    </location>
</feature>
<feature type="mutagenesis site" description="Does not affect 4-galactosyl-N-acetylglucosaminide 3-alpha-L- and 3-galactosyl-N-acetylglucosaminide 4-alpha-L-fucosyltransferase activity; when associated with T-101; R-110; K-111 and T-118." evidence="7">
    <original>N</original>
    <variation>H</variation>
    <location>
        <position position="105"/>
    </location>
</feature>
<feature type="mutagenesis site" description="Does not affect 4-galactosyl-N-acetylglucosaminide 3-alpha-L- and 3-galactosyl-N-acetylglucosaminide 4-alpha-L-fucosyltransferase activity; when associated with T-101; H-105; K-111 and T-118." evidence="7">
    <original>S</original>
    <variation>R</variation>
    <location>
        <position position="110"/>
    </location>
</feature>
<feature type="mutagenesis site" description="Does not affect 4-galactosyl-N-acetylglucosaminide 3-alpha-L- and 3-galactosyl-N-acetylglucosaminide 4-alpha-L-fucosyltransferase activity; when associated with T-101; H-105; R-110 and T-118." evidence="7">
    <original>S</original>
    <variation>K</variation>
    <location>
        <position position="111"/>
    </location>
</feature>
<feature type="mutagenesis site" description="Does not affect 4-galactosyl-N-acetylglucosaminide 3-alpha-L- and 3-galactosyl-N-acetylglucosaminide 4-alpha-L-fucosyltransferase activity; when associated with T-101; H-105; R-110 and K-111." evidence="7">
    <original>A</original>
    <variation>T</variation>
    <location>
        <position position="118"/>
    </location>
</feature>
<feature type="mutagenesis site" description="Decreases both alpha-(1,3)-fucosyltransferase and alpha-(1,4)-fucosyltransferase activity of 50%." evidence="2">
    <original>W</original>
    <variation>A</variation>
    <location>
        <position position="124"/>
    </location>
</feature>
<feature type="mutagenesis site" description="Increases alpha-(1,3)-fucosyltransferase activity. Loss of alpha-(1,4)-fucosyltransferase activity. Loss of site-specific fucosylation; when associated with E-125 and V-126. Reverses the preferential fucosylation properties leading to production of 72% of sialyl-lewis x; when associated with K-87; E-125 and V-126. Significantly decreases to cell-surface expression of VIM2 antigen; when associated with K-87; E-125 and V-126." evidence="2 4">
    <original>W</original>
    <variation>R</variation>
    <location>
        <position position="124"/>
    </location>
</feature>
<feature type="mutagenesis site" description="Does not affect alpha-(1,3)-fucosyltransferase activity. Loss of alpha-(1,4)-fucosyltransferase activity." evidence="2">
    <original>W</original>
    <variation>V</variation>
    <location>
        <position position="124"/>
    </location>
</feature>
<feature type="mutagenesis site" description="Loss of site-specific fucosylation; when associated with R-124 and V-126. Reverses the preferential fucosylation properties leading to production of 72% of sialyl-lewis x; when associated with K-87; R-124 and V-126. Significantly decreases to cell-surface expression of VIM2 antigen; when associated with K-87; R-124 and V-126." evidence="4">
    <original>D</original>
    <variation>E</variation>
    <location>
        <position position="125"/>
    </location>
</feature>
<feature type="mutagenesis site" description="Loss of site-specific fucosylation; when associated with R-124 and E-125. Reverses the preferential fucosylation properties leading to production of 72% of sialyl-lewis x; when associated with K-87; R-124 and E-125. Significantly decreases to cell-surface expression of VIM2 antigen; when associated with K-87; R-124 and E-125." evidence="4">
    <original>I</original>
    <variation>V</variation>
    <location>
        <position position="126"/>
    </location>
</feature>
<feature type="sequence conflict" description="In Ref. 1; AAA98117, 2; AAC50188/AAC50189, 3; BAF83776, 5; EAW69134 and 6; AAI40906." evidence="10" ref="1 2 3 5 6">
    <original>H</original>
    <variation>R</variation>
    <location>
        <position position="334"/>
    </location>
</feature>